<gene>
    <name evidence="1" type="primary">mshB</name>
    <name type="ordered locus">Cgl1100</name>
    <name type="ordered locus">cg1250</name>
</gene>
<comment type="function">
    <text evidence="1">Catalyzes the deacetylation of 1D-myo-inositol 2-acetamido-2-deoxy-alpha-D-glucopyranoside (GlcNAc-Ins) in the mycothiol biosynthesis pathway.</text>
</comment>
<comment type="catalytic activity">
    <reaction evidence="1">
        <text>1D-myo-inositol 2-acetamido-2-deoxy-alpha-D-glucopyranoside + H2O = 1D-myo-inositol 2-amino-2-deoxy-alpha-D-glucopyranoside + acetate</text>
        <dbReference type="Rhea" id="RHEA:26180"/>
        <dbReference type="ChEBI" id="CHEBI:15377"/>
        <dbReference type="ChEBI" id="CHEBI:30089"/>
        <dbReference type="ChEBI" id="CHEBI:52442"/>
        <dbReference type="ChEBI" id="CHEBI:58886"/>
        <dbReference type="EC" id="3.5.1.103"/>
    </reaction>
</comment>
<comment type="cofactor">
    <cofactor evidence="1">
        <name>Zn(2+)</name>
        <dbReference type="ChEBI" id="CHEBI:29105"/>
    </cofactor>
    <text evidence="1">Binds 1 zinc ion per subunit.</text>
</comment>
<comment type="similarity">
    <text evidence="1">Belongs to the MshB deacetylase family.</text>
</comment>
<accession>Q8NRE9</accession>
<accession>Q6M666</accession>
<dbReference type="EC" id="3.5.1.103" evidence="1"/>
<dbReference type="EMBL" id="BA000036">
    <property type="protein sequence ID" value="BAB98493.1"/>
    <property type="molecule type" value="Genomic_DNA"/>
</dbReference>
<dbReference type="EMBL" id="BX927151">
    <property type="protein sequence ID" value="CAF19806.1"/>
    <property type="molecule type" value="Genomic_DNA"/>
</dbReference>
<dbReference type="RefSeq" id="NP_600328.1">
    <property type="nucleotide sequence ID" value="NC_003450.3"/>
</dbReference>
<dbReference type="RefSeq" id="WP_003858626.1">
    <property type="nucleotide sequence ID" value="NC_006958.1"/>
</dbReference>
<dbReference type="SMR" id="Q8NRE9"/>
<dbReference type="STRING" id="196627.cg1250"/>
<dbReference type="GeneID" id="1019085"/>
<dbReference type="KEGG" id="cgb:cg1250"/>
<dbReference type="KEGG" id="cgl:Cgl1100"/>
<dbReference type="PATRIC" id="fig|196627.13.peg.1079"/>
<dbReference type="eggNOG" id="COG2120">
    <property type="taxonomic scope" value="Bacteria"/>
</dbReference>
<dbReference type="HOGENOM" id="CLU_049311_2_1_11"/>
<dbReference type="OrthoDB" id="158614at2"/>
<dbReference type="BioCyc" id="CORYNE:G18NG-10672-MONOMER"/>
<dbReference type="Proteomes" id="UP000000582">
    <property type="component" value="Chromosome"/>
</dbReference>
<dbReference type="Proteomes" id="UP000001009">
    <property type="component" value="Chromosome"/>
</dbReference>
<dbReference type="GO" id="GO:0035595">
    <property type="term" value="F:N-acetylglucosaminylinositol deacetylase activity"/>
    <property type="evidence" value="ECO:0007669"/>
    <property type="project" value="UniProtKB-EC"/>
</dbReference>
<dbReference type="GO" id="GO:0008270">
    <property type="term" value="F:zinc ion binding"/>
    <property type="evidence" value="ECO:0007669"/>
    <property type="project" value="UniProtKB-UniRule"/>
</dbReference>
<dbReference type="GO" id="GO:0010125">
    <property type="term" value="P:mycothiol biosynthetic process"/>
    <property type="evidence" value="ECO:0007669"/>
    <property type="project" value="UniProtKB-UniRule"/>
</dbReference>
<dbReference type="Gene3D" id="3.40.50.10320">
    <property type="entry name" value="LmbE-like"/>
    <property type="match status" value="1"/>
</dbReference>
<dbReference type="HAMAP" id="MF_01696">
    <property type="entry name" value="MshB"/>
    <property type="match status" value="1"/>
</dbReference>
<dbReference type="InterPro" id="IPR003737">
    <property type="entry name" value="GlcNAc_PI_deacetylase-related"/>
</dbReference>
<dbReference type="InterPro" id="IPR024078">
    <property type="entry name" value="LmbE-like_dom_sf"/>
</dbReference>
<dbReference type="InterPro" id="IPR017810">
    <property type="entry name" value="Mycothiol_biosynthesis_MshB"/>
</dbReference>
<dbReference type="NCBIfam" id="TIGR03445">
    <property type="entry name" value="mycothiol_MshB"/>
    <property type="match status" value="1"/>
</dbReference>
<dbReference type="PANTHER" id="PTHR12993:SF26">
    <property type="entry name" value="1D-MYO-INOSITOL 2-ACETAMIDO-2-DEOXY-ALPHA-D-GLUCOPYRANOSIDE DEACETYLASE"/>
    <property type="match status" value="1"/>
</dbReference>
<dbReference type="PANTHER" id="PTHR12993">
    <property type="entry name" value="N-ACETYLGLUCOSAMINYL-PHOSPHATIDYLINOSITOL DE-N-ACETYLASE-RELATED"/>
    <property type="match status" value="1"/>
</dbReference>
<dbReference type="Pfam" id="PF02585">
    <property type="entry name" value="PIG-L"/>
    <property type="match status" value="1"/>
</dbReference>
<dbReference type="SUPFAM" id="SSF102588">
    <property type="entry name" value="LmbE-like"/>
    <property type="match status" value="1"/>
</dbReference>
<protein>
    <recommendedName>
        <fullName evidence="1">1D-myo-inositol 2-acetamido-2-deoxy-alpha-D-glucopyranoside deacetylase</fullName>
        <shortName evidence="1">GlcNAc-Ins deacetylase</shortName>
        <ecNumber evidence="1">3.5.1.103</ecNumber>
    </recommendedName>
    <alternativeName>
        <fullName>N-acetyl-1-D-myo-inositol 2-amino-2-deoxy-alpha-D-glucopyranoside deacetylase</fullName>
    </alternativeName>
</protein>
<proteinExistence type="inferred from homology"/>
<keyword id="KW-0378">Hydrolase</keyword>
<keyword id="KW-0479">Metal-binding</keyword>
<keyword id="KW-1185">Reference proteome</keyword>
<keyword id="KW-0862">Zinc</keyword>
<sequence length="290" mass="30921">MLKNDLSGARVVAVHAHPDDEAITTGGVLADLAARGADVTVITCTLGEQGEVIGETFAQLVNGDADQLGGFRIHELYASLEILGVRGIHLGGAGCWRDSGMVGDPANEHPRAFIHSGDRAVEQLKELLAELKPHLLITYGPDGGYGHPDHIRAHEITHAAAGEQRILWAVSDREELEDGLKAITGLPEGWGRGELSAVDSVDLSVELNDEVYATKVESMRAHATQLWIADGSVSRTNPVAAHAVTQQDNVKVWALSNLIAQPIMRHEHYQLGAGTPLPEGATGVLDGLEF</sequence>
<organism>
    <name type="scientific">Corynebacterium glutamicum (strain ATCC 13032 / DSM 20300 / JCM 1318 / BCRC 11384 / CCUG 27702 / LMG 3730 / NBRC 12168 / NCIMB 10025 / NRRL B-2784 / 534)</name>
    <dbReference type="NCBI Taxonomy" id="196627"/>
    <lineage>
        <taxon>Bacteria</taxon>
        <taxon>Bacillati</taxon>
        <taxon>Actinomycetota</taxon>
        <taxon>Actinomycetes</taxon>
        <taxon>Mycobacteriales</taxon>
        <taxon>Corynebacteriaceae</taxon>
        <taxon>Corynebacterium</taxon>
    </lineage>
</organism>
<name>MSHB_CORGL</name>
<reference key="1">
    <citation type="journal article" date="2003" name="Appl. Microbiol. Biotechnol.">
        <title>The Corynebacterium glutamicum genome: features and impacts on biotechnological processes.</title>
        <authorList>
            <person name="Ikeda M."/>
            <person name="Nakagawa S."/>
        </authorList>
    </citation>
    <scope>NUCLEOTIDE SEQUENCE [LARGE SCALE GENOMIC DNA]</scope>
    <source>
        <strain>ATCC 13032 / DSM 20300 / JCM 1318 / BCRC 11384 / CCUG 27702 / LMG 3730 / NBRC 12168 / NCIMB 10025 / NRRL B-2784 / 534</strain>
    </source>
</reference>
<reference key="2">
    <citation type="journal article" date="2003" name="J. Biotechnol.">
        <title>The complete Corynebacterium glutamicum ATCC 13032 genome sequence and its impact on the production of L-aspartate-derived amino acids and vitamins.</title>
        <authorList>
            <person name="Kalinowski J."/>
            <person name="Bathe B."/>
            <person name="Bartels D."/>
            <person name="Bischoff N."/>
            <person name="Bott M."/>
            <person name="Burkovski A."/>
            <person name="Dusch N."/>
            <person name="Eggeling L."/>
            <person name="Eikmanns B.J."/>
            <person name="Gaigalat L."/>
            <person name="Goesmann A."/>
            <person name="Hartmann M."/>
            <person name="Huthmacher K."/>
            <person name="Kraemer R."/>
            <person name="Linke B."/>
            <person name="McHardy A.C."/>
            <person name="Meyer F."/>
            <person name="Moeckel B."/>
            <person name="Pfefferle W."/>
            <person name="Puehler A."/>
            <person name="Rey D.A."/>
            <person name="Rueckert C."/>
            <person name="Rupp O."/>
            <person name="Sahm H."/>
            <person name="Wendisch V.F."/>
            <person name="Wiegraebe I."/>
            <person name="Tauch A."/>
        </authorList>
    </citation>
    <scope>NUCLEOTIDE SEQUENCE [LARGE SCALE GENOMIC DNA]</scope>
    <source>
        <strain>ATCC 13032 / DSM 20300 / JCM 1318 / BCRC 11384 / CCUG 27702 / LMG 3730 / NBRC 12168 / NCIMB 10025 / NRRL B-2784 / 534</strain>
    </source>
</reference>
<feature type="chain" id="PRO_0000400178" description="1D-myo-inositol 2-acetamido-2-deoxy-alpha-D-glucopyranoside deacetylase">
    <location>
        <begin position="1"/>
        <end position="290"/>
    </location>
</feature>
<feature type="binding site" evidence="1">
    <location>
        <position position="17"/>
    </location>
    <ligand>
        <name>Zn(2+)</name>
        <dbReference type="ChEBI" id="CHEBI:29105"/>
    </ligand>
</feature>
<feature type="binding site" evidence="1">
    <location>
        <position position="20"/>
    </location>
    <ligand>
        <name>Zn(2+)</name>
        <dbReference type="ChEBI" id="CHEBI:29105"/>
    </ligand>
</feature>
<feature type="binding site" evidence="1">
    <location>
        <position position="150"/>
    </location>
    <ligand>
        <name>Zn(2+)</name>
        <dbReference type="ChEBI" id="CHEBI:29105"/>
    </ligand>
</feature>
<evidence type="ECO:0000255" key="1">
    <source>
        <dbReference type="HAMAP-Rule" id="MF_01696"/>
    </source>
</evidence>